<sequence length="252" mass="27736">MSHRRDYGSDAVHVRITHDPPPENCFPNSGDSSVWATEDDYSRVWAINSDGAESPSKKTRSSSSSEIGKSFFKTKLCFKFRAGTCPYSASSCHFAHSAEELRLPPPPPPNWQETVTEASRNRESFAVSLGPRGNVAQTLKSPNWKTRICNKWQTTGYCPFGSHCHFAHGPSELHTFGGGLVEGECKIGTSATLDTKQRGQVDTVTSLVSPGVSSQRTSSAVTQKPNGVRTQRKWKGPDKISRVYGDWIDDIE</sequence>
<protein>
    <recommendedName>
        <fullName>Zinc finger CCCH domain-containing protein 28</fullName>
        <shortName>AtC3H28</shortName>
    </recommendedName>
</protein>
<name>C3H28_ARATH</name>
<reference key="1">
    <citation type="journal article" date="1999" name="Nature">
        <title>Sequence and analysis of chromosome 2 of the plant Arabidopsis thaliana.</title>
        <authorList>
            <person name="Lin X."/>
            <person name="Kaul S."/>
            <person name="Rounsley S.D."/>
            <person name="Shea T.P."/>
            <person name="Benito M.-I."/>
            <person name="Town C.D."/>
            <person name="Fujii C.Y."/>
            <person name="Mason T.M."/>
            <person name="Bowman C.L."/>
            <person name="Barnstead M.E."/>
            <person name="Feldblyum T.V."/>
            <person name="Buell C.R."/>
            <person name="Ketchum K.A."/>
            <person name="Lee J.J."/>
            <person name="Ronning C.M."/>
            <person name="Koo H.L."/>
            <person name="Moffat K.S."/>
            <person name="Cronin L.A."/>
            <person name="Shen M."/>
            <person name="Pai G."/>
            <person name="Van Aken S."/>
            <person name="Umayam L."/>
            <person name="Tallon L.J."/>
            <person name="Gill J.E."/>
            <person name="Adams M.D."/>
            <person name="Carrera A.J."/>
            <person name="Creasy T.H."/>
            <person name="Goodman H.M."/>
            <person name="Somerville C.R."/>
            <person name="Copenhaver G.P."/>
            <person name="Preuss D."/>
            <person name="Nierman W.C."/>
            <person name="White O."/>
            <person name="Eisen J.A."/>
            <person name="Salzberg S.L."/>
            <person name="Fraser C.M."/>
            <person name="Venter J.C."/>
        </authorList>
    </citation>
    <scope>NUCLEOTIDE SEQUENCE [LARGE SCALE GENOMIC DNA]</scope>
    <source>
        <strain>cv. Columbia</strain>
    </source>
</reference>
<reference key="2">
    <citation type="journal article" date="2017" name="Plant J.">
        <title>Araport11: a complete reannotation of the Arabidopsis thaliana reference genome.</title>
        <authorList>
            <person name="Cheng C.Y."/>
            <person name="Krishnakumar V."/>
            <person name="Chan A.P."/>
            <person name="Thibaud-Nissen F."/>
            <person name="Schobel S."/>
            <person name="Town C.D."/>
        </authorList>
    </citation>
    <scope>GENOME REANNOTATION</scope>
    <source>
        <strain>cv. Columbia</strain>
    </source>
</reference>
<reference key="3">
    <citation type="submission" date="2005-01" db="EMBL/GenBank/DDBJ databases">
        <title>Arabidopsis ORF clones.</title>
        <authorList>
            <person name="Kim C.J."/>
            <person name="Chen H."/>
            <person name="Cheuk R.F."/>
            <person name="Shinn P."/>
            <person name="Ecker J.R."/>
        </authorList>
    </citation>
    <scope>NUCLEOTIDE SEQUENCE [LARGE SCALE MRNA]</scope>
    <source>
        <strain>cv. Columbia</strain>
    </source>
</reference>
<reference key="4">
    <citation type="journal article" date="2008" name="BMC Genomics">
        <title>Genome-wide analysis of CCCH zinc finger family in Arabidopsis and rice.</title>
        <authorList>
            <person name="Wang D."/>
            <person name="Guo Y."/>
            <person name="Wu C."/>
            <person name="Yang G."/>
            <person name="Li Y."/>
            <person name="Zheng C."/>
        </authorList>
    </citation>
    <scope>NOMENCLATURE</scope>
</reference>
<proteinExistence type="evidence at protein level"/>
<accession>Q5PP65</accession>
<accession>O82297</accession>
<feature type="chain" id="PRO_0000371986" description="Zinc finger CCCH domain-containing protein 28">
    <location>
        <begin position="1"/>
        <end position="252"/>
    </location>
</feature>
<feature type="zinc finger region" description="C3H1-type 1" evidence="1">
    <location>
        <begin position="71"/>
        <end position="99"/>
    </location>
</feature>
<feature type="zinc finger region" description="C3H1-type 2" evidence="1">
    <location>
        <begin position="143"/>
        <end position="171"/>
    </location>
</feature>
<feature type="region of interest" description="Disordered" evidence="2">
    <location>
        <begin position="1"/>
        <end position="31"/>
    </location>
</feature>
<feature type="compositionally biased region" description="Basic and acidic residues" evidence="2">
    <location>
        <begin position="1"/>
        <end position="21"/>
    </location>
</feature>
<evidence type="ECO:0000255" key="1">
    <source>
        <dbReference type="PROSITE-ProRule" id="PRU00723"/>
    </source>
</evidence>
<evidence type="ECO:0000256" key="2">
    <source>
        <dbReference type="SAM" id="MobiDB-lite"/>
    </source>
</evidence>
<evidence type="ECO:0000305" key="3"/>
<comment type="interaction">
    <interactant intactId="EBI-15192363">
        <id>Q5PP65</id>
    </interactant>
    <interactant intactId="EBI-15192365">
        <id>Q9LFC0</id>
        <label>HAKAI</label>
    </interactant>
    <organismsDiffer>false</organismsDiffer>
    <experiments>3</experiments>
</comment>
<comment type="sequence caution" evidence="3">
    <conflict type="erroneous gene model prediction">
        <sequence resource="EMBL-CDS" id="AAC36178"/>
    </conflict>
</comment>
<gene>
    <name type="ordered locus">At2g35430</name>
    <name type="ORF">T32F12.19</name>
</gene>
<dbReference type="EMBL" id="AC005314">
    <property type="protein sequence ID" value="AAC36178.1"/>
    <property type="status" value="ALT_SEQ"/>
    <property type="molecule type" value="Genomic_DNA"/>
</dbReference>
<dbReference type="EMBL" id="CP002685">
    <property type="protein sequence ID" value="AEC09108.1"/>
    <property type="molecule type" value="Genomic_DNA"/>
</dbReference>
<dbReference type="EMBL" id="BT020232">
    <property type="protein sequence ID" value="AAV74226.1"/>
    <property type="molecule type" value="mRNA"/>
</dbReference>
<dbReference type="EMBL" id="BT020553">
    <property type="protein sequence ID" value="AAW70399.1"/>
    <property type="molecule type" value="mRNA"/>
</dbReference>
<dbReference type="PIR" id="E84768">
    <property type="entry name" value="E84768"/>
</dbReference>
<dbReference type="RefSeq" id="NP_181086.2">
    <property type="nucleotide sequence ID" value="NM_129095.4"/>
</dbReference>
<dbReference type="BioGRID" id="3455">
    <property type="interactions" value="13"/>
</dbReference>
<dbReference type="FunCoup" id="Q5PP65">
    <property type="interactions" value="24"/>
</dbReference>
<dbReference type="IntAct" id="Q5PP65">
    <property type="interactions" value="13"/>
</dbReference>
<dbReference type="STRING" id="3702.Q5PP65"/>
<dbReference type="iPTMnet" id="Q5PP65"/>
<dbReference type="PaxDb" id="3702-AT2G35430.1"/>
<dbReference type="ProteomicsDB" id="239109"/>
<dbReference type="EnsemblPlants" id="AT2G35430.1">
    <property type="protein sequence ID" value="AT2G35430.1"/>
    <property type="gene ID" value="AT2G35430"/>
</dbReference>
<dbReference type="GeneID" id="818109"/>
<dbReference type="Gramene" id="AT2G35430.1">
    <property type="protein sequence ID" value="AT2G35430.1"/>
    <property type="gene ID" value="AT2G35430"/>
</dbReference>
<dbReference type="KEGG" id="ath:AT2G35430"/>
<dbReference type="Araport" id="AT2G35430"/>
<dbReference type="TAIR" id="AT2G35430"/>
<dbReference type="eggNOG" id="KOG1677">
    <property type="taxonomic scope" value="Eukaryota"/>
</dbReference>
<dbReference type="HOGENOM" id="CLU_060653_1_0_1"/>
<dbReference type="InParanoid" id="Q5PP65"/>
<dbReference type="OMA" id="CKKFYSG"/>
<dbReference type="PhylomeDB" id="Q5PP65"/>
<dbReference type="PRO" id="PR:Q5PP65"/>
<dbReference type="Proteomes" id="UP000006548">
    <property type="component" value="Chromosome 2"/>
</dbReference>
<dbReference type="ExpressionAtlas" id="Q5PP65">
    <property type="expression patterns" value="baseline and differential"/>
</dbReference>
<dbReference type="GO" id="GO:0003677">
    <property type="term" value="F:DNA binding"/>
    <property type="evidence" value="ECO:0007669"/>
    <property type="project" value="UniProtKB-KW"/>
</dbReference>
<dbReference type="GO" id="GO:0003700">
    <property type="term" value="F:DNA-binding transcription factor activity"/>
    <property type="evidence" value="ECO:0000250"/>
    <property type="project" value="TAIR"/>
</dbReference>
<dbReference type="GO" id="GO:0003729">
    <property type="term" value="F:mRNA binding"/>
    <property type="evidence" value="ECO:0007669"/>
    <property type="project" value="InterPro"/>
</dbReference>
<dbReference type="GO" id="GO:0008270">
    <property type="term" value="F:zinc ion binding"/>
    <property type="evidence" value="ECO:0007669"/>
    <property type="project" value="UniProtKB-KW"/>
</dbReference>
<dbReference type="GO" id="GO:0006355">
    <property type="term" value="P:regulation of DNA-templated transcription"/>
    <property type="evidence" value="ECO:0000304"/>
    <property type="project" value="TAIR"/>
</dbReference>
<dbReference type="FunFam" id="4.10.1000.10:FF:000003">
    <property type="entry name" value="Zinc finger CCCH domain-containing protein"/>
    <property type="match status" value="1"/>
</dbReference>
<dbReference type="FunFam" id="4.10.1000.10:FF:000016">
    <property type="entry name" value="Zinc finger CCCH domain-containing protein"/>
    <property type="match status" value="1"/>
</dbReference>
<dbReference type="Gene3D" id="4.10.1000.10">
    <property type="entry name" value="Zinc finger, CCCH-type"/>
    <property type="match status" value="2"/>
</dbReference>
<dbReference type="InterPro" id="IPR045877">
    <property type="entry name" value="ZFP36-like"/>
</dbReference>
<dbReference type="InterPro" id="IPR000571">
    <property type="entry name" value="Znf_CCCH"/>
</dbReference>
<dbReference type="InterPro" id="IPR036855">
    <property type="entry name" value="Znf_CCCH_sf"/>
</dbReference>
<dbReference type="PANTHER" id="PTHR12547">
    <property type="entry name" value="CCCH ZINC FINGER/TIS11-RELATED"/>
    <property type="match status" value="1"/>
</dbReference>
<dbReference type="Pfam" id="PF00642">
    <property type="entry name" value="zf-CCCH"/>
    <property type="match status" value="1"/>
</dbReference>
<dbReference type="SMART" id="SM00356">
    <property type="entry name" value="ZnF_C3H1"/>
    <property type="match status" value="2"/>
</dbReference>
<dbReference type="SUPFAM" id="SSF90229">
    <property type="entry name" value="CCCH zinc finger"/>
    <property type="match status" value="2"/>
</dbReference>
<dbReference type="PROSITE" id="PS50103">
    <property type="entry name" value="ZF_C3H1"/>
    <property type="match status" value="2"/>
</dbReference>
<organism>
    <name type="scientific">Arabidopsis thaliana</name>
    <name type="common">Mouse-ear cress</name>
    <dbReference type="NCBI Taxonomy" id="3702"/>
    <lineage>
        <taxon>Eukaryota</taxon>
        <taxon>Viridiplantae</taxon>
        <taxon>Streptophyta</taxon>
        <taxon>Embryophyta</taxon>
        <taxon>Tracheophyta</taxon>
        <taxon>Spermatophyta</taxon>
        <taxon>Magnoliopsida</taxon>
        <taxon>eudicotyledons</taxon>
        <taxon>Gunneridae</taxon>
        <taxon>Pentapetalae</taxon>
        <taxon>rosids</taxon>
        <taxon>malvids</taxon>
        <taxon>Brassicales</taxon>
        <taxon>Brassicaceae</taxon>
        <taxon>Camelineae</taxon>
        <taxon>Arabidopsis</taxon>
    </lineage>
</organism>
<keyword id="KW-0238">DNA-binding</keyword>
<keyword id="KW-0479">Metal-binding</keyword>
<keyword id="KW-1185">Reference proteome</keyword>
<keyword id="KW-0677">Repeat</keyword>
<keyword id="KW-0862">Zinc</keyword>
<keyword id="KW-0863">Zinc-finger</keyword>